<organism>
    <name type="scientific">Psychrobacter cryohalolentis (strain ATCC BAA-1226 / DSM 17306 / VKM B-2378 / K5)</name>
    <dbReference type="NCBI Taxonomy" id="335284"/>
    <lineage>
        <taxon>Bacteria</taxon>
        <taxon>Pseudomonadati</taxon>
        <taxon>Pseudomonadota</taxon>
        <taxon>Gammaproteobacteria</taxon>
        <taxon>Moraxellales</taxon>
        <taxon>Moraxellaceae</taxon>
        <taxon>Psychrobacter</taxon>
    </lineage>
</organism>
<evidence type="ECO:0000255" key="1">
    <source>
        <dbReference type="HAMAP-Rule" id="MF_00736"/>
    </source>
</evidence>
<evidence type="ECO:0000305" key="2"/>
<comment type="function">
    <text evidence="1">Forms part of the ribosomal stalk which helps the ribosome interact with GTP-bound translation factors.</text>
</comment>
<comment type="subunit">
    <text evidence="1">Part of the ribosomal stalk of the 50S ribosomal subunit. Interacts with L10 and the large rRNA to form the base of the stalk. L10 forms an elongated spine to which L12 dimers bind in a sequential fashion forming a multimeric L10(L12)X complex.</text>
</comment>
<comment type="PTM">
    <text evidence="1">One or more lysine residues are methylated.</text>
</comment>
<comment type="similarity">
    <text evidence="1">Belongs to the universal ribosomal protein uL11 family.</text>
</comment>
<feature type="chain" id="PRO_0000258192" description="Large ribosomal subunit protein uL11">
    <location>
        <begin position="1"/>
        <end position="143"/>
    </location>
</feature>
<name>RL11_PSYCK</name>
<accession>Q1Q8P5</accession>
<sequence>MAKKIDGYIKLQVPAGKANPSPPIGPALGQKGVNIMAFCKEFNAATSNQEPGLPIPTEITVYSDKSFTFIMKSPPAAYLLRKAAGIAKGSGTPNTAKVGKVDRAQLEDIVKTKDADLTAADLDAAVRTIAGTARSMGITVEGV</sequence>
<dbReference type="EMBL" id="CP000323">
    <property type="protein sequence ID" value="ABE75958.1"/>
    <property type="molecule type" value="Genomic_DNA"/>
</dbReference>
<dbReference type="RefSeq" id="WP_010201717.1">
    <property type="nucleotide sequence ID" value="NC_007969.1"/>
</dbReference>
<dbReference type="SMR" id="Q1Q8P5"/>
<dbReference type="STRING" id="335284.Pcryo_2181"/>
<dbReference type="GeneID" id="60255812"/>
<dbReference type="KEGG" id="pcr:Pcryo_2181"/>
<dbReference type="eggNOG" id="COG0080">
    <property type="taxonomic scope" value="Bacteria"/>
</dbReference>
<dbReference type="HOGENOM" id="CLU_074237_2_1_6"/>
<dbReference type="Proteomes" id="UP000002425">
    <property type="component" value="Chromosome"/>
</dbReference>
<dbReference type="GO" id="GO:0022625">
    <property type="term" value="C:cytosolic large ribosomal subunit"/>
    <property type="evidence" value="ECO:0007669"/>
    <property type="project" value="TreeGrafter"/>
</dbReference>
<dbReference type="GO" id="GO:0070180">
    <property type="term" value="F:large ribosomal subunit rRNA binding"/>
    <property type="evidence" value="ECO:0007669"/>
    <property type="project" value="UniProtKB-UniRule"/>
</dbReference>
<dbReference type="GO" id="GO:0003735">
    <property type="term" value="F:structural constituent of ribosome"/>
    <property type="evidence" value="ECO:0007669"/>
    <property type="project" value="InterPro"/>
</dbReference>
<dbReference type="GO" id="GO:0006412">
    <property type="term" value="P:translation"/>
    <property type="evidence" value="ECO:0007669"/>
    <property type="project" value="UniProtKB-UniRule"/>
</dbReference>
<dbReference type="CDD" id="cd00349">
    <property type="entry name" value="Ribosomal_L11"/>
    <property type="match status" value="1"/>
</dbReference>
<dbReference type="FunFam" id="1.10.10.250:FF:000001">
    <property type="entry name" value="50S ribosomal protein L11"/>
    <property type="match status" value="1"/>
</dbReference>
<dbReference type="FunFam" id="3.30.1550.10:FF:000001">
    <property type="entry name" value="50S ribosomal protein L11"/>
    <property type="match status" value="1"/>
</dbReference>
<dbReference type="Gene3D" id="1.10.10.250">
    <property type="entry name" value="Ribosomal protein L11, C-terminal domain"/>
    <property type="match status" value="1"/>
</dbReference>
<dbReference type="Gene3D" id="3.30.1550.10">
    <property type="entry name" value="Ribosomal protein L11/L12, N-terminal domain"/>
    <property type="match status" value="1"/>
</dbReference>
<dbReference type="HAMAP" id="MF_00736">
    <property type="entry name" value="Ribosomal_uL11"/>
    <property type="match status" value="1"/>
</dbReference>
<dbReference type="InterPro" id="IPR000911">
    <property type="entry name" value="Ribosomal_uL11"/>
</dbReference>
<dbReference type="InterPro" id="IPR006519">
    <property type="entry name" value="Ribosomal_uL11_bac-typ"/>
</dbReference>
<dbReference type="InterPro" id="IPR020783">
    <property type="entry name" value="Ribosomal_uL11_C"/>
</dbReference>
<dbReference type="InterPro" id="IPR036769">
    <property type="entry name" value="Ribosomal_uL11_C_sf"/>
</dbReference>
<dbReference type="InterPro" id="IPR020785">
    <property type="entry name" value="Ribosomal_uL11_CS"/>
</dbReference>
<dbReference type="InterPro" id="IPR020784">
    <property type="entry name" value="Ribosomal_uL11_N"/>
</dbReference>
<dbReference type="InterPro" id="IPR036796">
    <property type="entry name" value="Ribosomal_uL11_N_sf"/>
</dbReference>
<dbReference type="NCBIfam" id="TIGR01632">
    <property type="entry name" value="L11_bact"/>
    <property type="match status" value="1"/>
</dbReference>
<dbReference type="PANTHER" id="PTHR11661">
    <property type="entry name" value="60S RIBOSOMAL PROTEIN L12"/>
    <property type="match status" value="1"/>
</dbReference>
<dbReference type="PANTHER" id="PTHR11661:SF1">
    <property type="entry name" value="LARGE RIBOSOMAL SUBUNIT PROTEIN UL11M"/>
    <property type="match status" value="1"/>
</dbReference>
<dbReference type="Pfam" id="PF00298">
    <property type="entry name" value="Ribosomal_L11"/>
    <property type="match status" value="1"/>
</dbReference>
<dbReference type="Pfam" id="PF03946">
    <property type="entry name" value="Ribosomal_L11_N"/>
    <property type="match status" value="1"/>
</dbReference>
<dbReference type="SMART" id="SM00649">
    <property type="entry name" value="RL11"/>
    <property type="match status" value="1"/>
</dbReference>
<dbReference type="SUPFAM" id="SSF54747">
    <property type="entry name" value="Ribosomal L11/L12e N-terminal domain"/>
    <property type="match status" value="1"/>
</dbReference>
<dbReference type="SUPFAM" id="SSF46906">
    <property type="entry name" value="Ribosomal protein L11, C-terminal domain"/>
    <property type="match status" value="1"/>
</dbReference>
<dbReference type="PROSITE" id="PS00359">
    <property type="entry name" value="RIBOSOMAL_L11"/>
    <property type="match status" value="1"/>
</dbReference>
<gene>
    <name evidence="1" type="primary">rplK</name>
    <name type="ordered locus">Pcryo_2181</name>
</gene>
<reference key="1">
    <citation type="submission" date="2006-03" db="EMBL/GenBank/DDBJ databases">
        <title>Complete sequence of chromosome of Psychrobacter cryohalolentis K5.</title>
        <authorList>
            <consortium name="US DOE Joint Genome Institute"/>
            <person name="Copeland A."/>
            <person name="Lucas S."/>
            <person name="Lapidus A."/>
            <person name="Barry K."/>
            <person name="Detter J.C."/>
            <person name="Glavina T."/>
            <person name="Hammon N."/>
            <person name="Israni S."/>
            <person name="Dalin E."/>
            <person name="Tice H."/>
            <person name="Pitluck S."/>
            <person name="Brettin T."/>
            <person name="Bruce D."/>
            <person name="Han C."/>
            <person name="Tapia R."/>
            <person name="Sims D.R."/>
            <person name="Gilna P."/>
            <person name="Schmutz J."/>
            <person name="Larimer F."/>
            <person name="Land M."/>
            <person name="Hauser L."/>
            <person name="Kyrpides N."/>
            <person name="Kim E."/>
            <person name="Richardson P."/>
        </authorList>
    </citation>
    <scope>NUCLEOTIDE SEQUENCE [LARGE SCALE GENOMIC DNA]</scope>
    <source>
        <strain>ATCC BAA-1226 / DSM 17306 / VKM B-2378 / K5</strain>
    </source>
</reference>
<keyword id="KW-0488">Methylation</keyword>
<keyword id="KW-0687">Ribonucleoprotein</keyword>
<keyword id="KW-0689">Ribosomal protein</keyword>
<keyword id="KW-0694">RNA-binding</keyword>
<keyword id="KW-0699">rRNA-binding</keyword>
<protein>
    <recommendedName>
        <fullName evidence="1">Large ribosomal subunit protein uL11</fullName>
    </recommendedName>
    <alternativeName>
        <fullName evidence="2">50S ribosomal protein L11</fullName>
    </alternativeName>
</protein>
<proteinExistence type="inferred from homology"/>